<dbReference type="EMBL" id="M84729">
    <property type="protein sequence ID" value="AAA48658.1"/>
    <property type="molecule type" value="mRNA"/>
</dbReference>
<dbReference type="PIR" id="JH0171">
    <property type="entry name" value="JH0171"/>
</dbReference>
<dbReference type="RefSeq" id="NP_990845.1">
    <property type="nucleotide sequence ID" value="NM_205514.1"/>
</dbReference>
<dbReference type="SMR" id="P22728"/>
<dbReference type="FunCoup" id="P22728">
    <property type="interactions" value="12"/>
</dbReference>
<dbReference type="GeneID" id="396520"/>
<dbReference type="CTD" id="5957"/>
<dbReference type="VEuPathDB" id="HostDB:geneid_396161"/>
<dbReference type="InParanoid" id="P22728"/>
<dbReference type="PhylomeDB" id="P22728"/>
<dbReference type="PRO" id="PR:P22728"/>
<dbReference type="Proteomes" id="UP000000539">
    <property type="component" value="Unassembled WGS sequence"/>
</dbReference>
<dbReference type="GO" id="GO:0005509">
    <property type="term" value="F:calcium ion binding"/>
    <property type="evidence" value="ECO:0000318"/>
    <property type="project" value="GO_Central"/>
</dbReference>
<dbReference type="GO" id="GO:0009966">
    <property type="term" value="P:regulation of signal transduction"/>
    <property type="evidence" value="ECO:0000318"/>
    <property type="project" value="GO_Central"/>
</dbReference>
<dbReference type="GO" id="GO:0007601">
    <property type="term" value="P:visual perception"/>
    <property type="evidence" value="ECO:0007669"/>
    <property type="project" value="UniProtKB-KW"/>
</dbReference>
<dbReference type="CDD" id="cd00051">
    <property type="entry name" value="EFh"/>
    <property type="match status" value="1"/>
</dbReference>
<dbReference type="FunFam" id="1.10.238.10:FF:000009">
    <property type="entry name" value="Visinin-like protein 1"/>
    <property type="match status" value="1"/>
</dbReference>
<dbReference type="Gene3D" id="1.10.238.10">
    <property type="entry name" value="EF-hand"/>
    <property type="match status" value="2"/>
</dbReference>
<dbReference type="InterPro" id="IPR011992">
    <property type="entry name" value="EF-hand-dom_pair"/>
</dbReference>
<dbReference type="InterPro" id="IPR018247">
    <property type="entry name" value="EF_Hand_1_Ca_BS"/>
</dbReference>
<dbReference type="InterPro" id="IPR002048">
    <property type="entry name" value="EF_hand_dom"/>
</dbReference>
<dbReference type="InterPro" id="IPR028846">
    <property type="entry name" value="Recoverin"/>
</dbReference>
<dbReference type="PANTHER" id="PTHR23055">
    <property type="entry name" value="CALCIUM BINDING PROTEINS"/>
    <property type="match status" value="1"/>
</dbReference>
<dbReference type="PANTHER" id="PTHR23055:SF166">
    <property type="entry name" value="VISININ"/>
    <property type="match status" value="1"/>
</dbReference>
<dbReference type="Pfam" id="PF13202">
    <property type="entry name" value="EF-hand_5"/>
    <property type="match status" value="2"/>
</dbReference>
<dbReference type="PRINTS" id="PR00450">
    <property type="entry name" value="RECOVERIN"/>
</dbReference>
<dbReference type="SMART" id="SM00054">
    <property type="entry name" value="EFh"/>
    <property type="match status" value="2"/>
</dbReference>
<dbReference type="SUPFAM" id="SSF47473">
    <property type="entry name" value="EF-hand"/>
    <property type="match status" value="1"/>
</dbReference>
<dbReference type="PROSITE" id="PS00018">
    <property type="entry name" value="EF_HAND_1"/>
    <property type="match status" value="2"/>
</dbReference>
<dbReference type="PROSITE" id="PS50222">
    <property type="entry name" value="EF_HAND_2"/>
    <property type="match status" value="3"/>
</dbReference>
<organism>
    <name type="scientific">Gallus gallus</name>
    <name type="common">Chicken</name>
    <dbReference type="NCBI Taxonomy" id="9031"/>
    <lineage>
        <taxon>Eukaryota</taxon>
        <taxon>Metazoa</taxon>
        <taxon>Chordata</taxon>
        <taxon>Craniata</taxon>
        <taxon>Vertebrata</taxon>
        <taxon>Euteleostomi</taxon>
        <taxon>Archelosauria</taxon>
        <taxon>Archosauria</taxon>
        <taxon>Dinosauria</taxon>
        <taxon>Saurischia</taxon>
        <taxon>Theropoda</taxon>
        <taxon>Coelurosauria</taxon>
        <taxon>Aves</taxon>
        <taxon>Neognathae</taxon>
        <taxon>Galloanserae</taxon>
        <taxon>Galliformes</taxon>
        <taxon>Phasianidae</taxon>
        <taxon>Phasianinae</taxon>
        <taxon>Gallus</taxon>
    </lineage>
</organism>
<protein>
    <recommendedName>
        <fullName>Visinin</fullName>
    </recommendedName>
</protein>
<accession>P22728</accession>
<reference key="1">
    <citation type="journal article" date="1990" name="Neuron">
        <title>Visinin: a novel calcium binding protein expressed in retinal cone cells.</title>
        <authorList>
            <person name="Yamagata K."/>
            <person name="Goto K."/>
            <person name="Kuo C.H."/>
            <person name="Kondo H."/>
            <person name="Miki N."/>
        </authorList>
    </citation>
    <scope>NUCLEOTIDE SEQUENCE [MRNA]</scope>
    <source>
        <tissue>Retina</tissue>
    </source>
</reference>
<reference key="2">
    <citation type="journal article" date="1992" name="Biochem. Biophys. Res. Commun.">
        <title>Visinin: biochemical and molecular comparisons in normal and rd chick retina.</title>
        <authorList>
            <person name="Semple-Rowland S.L."/>
            <person name="van der Wel H."/>
        </authorList>
    </citation>
    <scope>NUCLEOTIDE SEQUENCE [MRNA]</scope>
</reference>
<comment type="function">
    <text>Seems to be implicated in the pathway from retinal rod guanylate cyclase to rhodopsin. May be involved in the blocking of the phosphorylation of rhodopsin.</text>
</comment>
<comment type="tissue specificity">
    <text>Retinal cell specific protein.</text>
</comment>
<comment type="miscellaneous">
    <text>Probably binds two or three calcium ions.</text>
</comment>
<comment type="similarity">
    <text evidence="3">Belongs to the recoverin family.</text>
</comment>
<proteinExistence type="evidence at transcript level"/>
<sequence>MGNSRSSALSREVLQELRASTRYTEEELSRWYEGFQRQCPDGRIRCDEFERIYGNFFPNSEPQGYARHVFRSFDTNDDGTLDFREYIIALHLTSSGKTHLKLEWAFSLFDVDRNGEVSKSEVLEIITAIFKMIPEEERLQLPEDENSPQKRADKLWAYFNKGENDKIAEGEFIDGVMKNDAIMRLIQYEPKK</sequence>
<keyword id="KW-0106">Calcium</keyword>
<keyword id="KW-0449">Lipoprotein</keyword>
<keyword id="KW-0479">Metal-binding</keyword>
<keyword id="KW-0519">Myristate</keyword>
<keyword id="KW-1185">Reference proteome</keyword>
<keyword id="KW-0677">Repeat</keyword>
<keyword id="KW-0716">Sensory transduction</keyword>
<keyword id="KW-0844">Vision</keyword>
<evidence type="ECO:0000250" key="1"/>
<evidence type="ECO:0000255" key="2">
    <source>
        <dbReference type="PROSITE-ProRule" id="PRU00448"/>
    </source>
</evidence>
<evidence type="ECO:0000305" key="3"/>
<feature type="initiator methionine" description="Removed" evidence="1">
    <location>
        <position position="1"/>
    </location>
</feature>
<feature type="chain" id="PRO_0000073761" description="Visinin">
    <location>
        <begin position="2"/>
        <end position="192"/>
    </location>
</feature>
<feature type="domain" description="EF-hand 1" evidence="2">
    <location>
        <begin position="24"/>
        <end position="59"/>
    </location>
</feature>
<feature type="domain" description="EF-hand 2" evidence="2">
    <location>
        <begin position="61"/>
        <end position="96"/>
    </location>
</feature>
<feature type="domain" description="EF-hand 3" evidence="2">
    <location>
        <begin position="97"/>
        <end position="132"/>
    </location>
</feature>
<feature type="domain" description="EF-hand 4" evidence="3">
    <location>
        <begin position="146"/>
        <end position="181"/>
    </location>
</feature>
<feature type="binding site" evidence="2">
    <location>
        <position position="74"/>
    </location>
    <ligand>
        <name>Ca(2+)</name>
        <dbReference type="ChEBI" id="CHEBI:29108"/>
        <label>1</label>
    </ligand>
</feature>
<feature type="binding site" evidence="2">
    <location>
        <position position="76"/>
    </location>
    <ligand>
        <name>Ca(2+)</name>
        <dbReference type="ChEBI" id="CHEBI:29108"/>
        <label>1</label>
    </ligand>
</feature>
<feature type="binding site" evidence="2">
    <location>
        <position position="78"/>
    </location>
    <ligand>
        <name>Ca(2+)</name>
        <dbReference type="ChEBI" id="CHEBI:29108"/>
        <label>1</label>
    </ligand>
</feature>
<feature type="binding site" evidence="2">
    <location>
        <position position="80"/>
    </location>
    <ligand>
        <name>Ca(2+)</name>
        <dbReference type="ChEBI" id="CHEBI:29108"/>
        <label>1</label>
    </ligand>
</feature>
<feature type="binding site" evidence="2">
    <location>
        <position position="85"/>
    </location>
    <ligand>
        <name>Ca(2+)</name>
        <dbReference type="ChEBI" id="CHEBI:29108"/>
        <label>1</label>
    </ligand>
</feature>
<feature type="binding site" evidence="2">
    <location>
        <position position="110"/>
    </location>
    <ligand>
        <name>Ca(2+)</name>
        <dbReference type="ChEBI" id="CHEBI:29108"/>
        <label>2</label>
    </ligand>
</feature>
<feature type="binding site" evidence="2">
    <location>
        <position position="112"/>
    </location>
    <ligand>
        <name>Ca(2+)</name>
        <dbReference type="ChEBI" id="CHEBI:29108"/>
        <label>2</label>
    </ligand>
</feature>
<feature type="binding site" evidence="2">
    <location>
        <position position="114"/>
    </location>
    <ligand>
        <name>Ca(2+)</name>
        <dbReference type="ChEBI" id="CHEBI:29108"/>
        <label>2</label>
    </ligand>
</feature>
<feature type="binding site" evidence="2">
    <location>
        <position position="116"/>
    </location>
    <ligand>
        <name>Ca(2+)</name>
        <dbReference type="ChEBI" id="CHEBI:29108"/>
        <label>2</label>
    </ligand>
</feature>
<feature type="binding site" evidence="2">
    <location>
        <position position="121"/>
    </location>
    <ligand>
        <name>Ca(2+)</name>
        <dbReference type="ChEBI" id="CHEBI:29108"/>
        <label>2</label>
    </ligand>
</feature>
<feature type="binding site" evidence="3">
    <location>
        <position position="164"/>
    </location>
    <ligand>
        <name>Ca(2+)</name>
        <dbReference type="ChEBI" id="CHEBI:29108"/>
        <label>3</label>
    </ligand>
</feature>
<feature type="binding site" evidence="3">
    <location>
        <position position="166"/>
    </location>
    <ligand>
        <name>Ca(2+)</name>
        <dbReference type="ChEBI" id="CHEBI:29108"/>
        <label>3</label>
    </ligand>
</feature>
<feature type="binding site" evidence="3">
    <location>
        <position position="171"/>
    </location>
    <ligand>
        <name>Ca(2+)</name>
        <dbReference type="ChEBI" id="CHEBI:29108"/>
        <label>3</label>
    </ligand>
</feature>
<feature type="lipid moiety-binding region" description="N-myristoyl glycine" evidence="1">
    <location>
        <position position="2"/>
    </location>
</feature>
<feature type="sequence conflict" description="In Ref. 1; no nucleotide entry." evidence="3" ref="1">
    <original>P</original>
    <variation>S</variation>
    <location>
        <position position="40"/>
    </location>
</feature>
<name>VISI_CHICK</name>